<name>IF2_ECOSM</name>
<feature type="chain" id="PRO_1000117332" description="Translation initiation factor IF-2">
    <location>
        <begin position="1"/>
        <end position="890"/>
    </location>
</feature>
<feature type="domain" description="tr-type G">
    <location>
        <begin position="389"/>
        <end position="558"/>
    </location>
</feature>
<feature type="region of interest" description="Disordered" evidence="3">
    <location>
        <begin position="45"/>
        <end position="304"/>
    </location>
</feature>
<feature type="region of interest" description="G1" evidence="1">
    <location>
        <begin position="398"/>
        <end position="405"/>
    </location>
</feature>
<feature type="region of interest" description="G2" evidence="1">
    <location>
        <begin position="423"/>
        <end position="427"/>
    </location>
</feature>
<feature type="region of interest" description="G3" evidence="1">
    <location>
        <begin position="444"/>
        <end position="447"/>
    </location>
</feature>
<feature type="region of interest" description="G4" evidence="1">
    <location>
        <begin position="498"/>
        <end position="501"/>
    </location>
</feature>
<feature type="region of interest" description="G5" evidence="1">
    <location>
        <begin position="534"/>
        <end position="536"/>
    </location>
</feature>
<feature type="compositionally biased region" description="Polar residues" evidence="3">
    <location>
        <begin position="67"/>
        <end position="81"/>
    </location>
</feature>
<feature type="compositionally biased region" description="Basic and acidic residues" evidence="3">
    <location>
        <begin position="92"/>
        <end position="217"/>
    </location>
</feature>
<feature type="compositionally biased region" description="Basic residues" evidence="3">
    <location>
        <begin position="252"/>
        <end position="266"/>
    </location>
</feature>
<feature type="compositionally biased region" description="Basic and acidic residues" evidence="3">
    <location>
        <begin position="267"/>
        <end position="280"/>
    </location>
</feature>
<feature type="binding site" evidence="2">
    <location>
        <begin position="398"/>
        <end position="405"/>
    </location>
    <ligand>
        <name>GTP</name>
        <dbReference type="ChEBI" id="CHEBI:37565"/>
    </ligand>
</feature>
<feature type="binding site" evidence="2">
    <location>
        <begin position="444"/>
        <end position="448"/>
    </location>
    <ligand>
        <name>GTP</name>
        <dbReference type="ChEBI" id="CHEBI:37565"/>
    </ligand>
</feature>
<feature type="binding site" evidence="2">
    <location>
        <begin position="498"/>
        <end position="501"/>
    </location>
    <ligand>
        <name>GTP</name>
        <dbReference type="ChEBI" id="CHEBI:37565"/>
    </ligand>
</feature>
<feature type="modified residue" description="N6-acetyllysine" evidence="1">
    <location>
        <position position="808"/>
    </location>
</feature>
<dbReference type="EMBL" id="CP000970">
    <property type="protein sequence ID" value="ACB19640.1"/>
    <property type="molecule type" value="Genomic_DNA"/>
</dbReference>
<dbReference type="RefSeq" id="WP_000133046.1">
    <property type="nucleotide sequence ID" value="NC_010498.1"/>
</dbReference>
<dbReference type="BMRB" id="B1LFS0"/>
<dbReference type="SMR" id="B1LFS0"/>
<dbReference type="KEGG" id="ecm:EcSMS35_3464"/>
<dbReference type="HOGENOM" id="CLU_006301_6_3_6"/>
<dbReference type="Proteomes" id="UP000007011">
    <property type="component" value="Chromosome"/>
</dbReference>
<dbReference type="GO" id="GO:0005829">
    <property type="term" value="C:cytosol"/>
    <property type="evidence" value="ECO:0007669"/>
    <property type="project" value="TreeGrafter"/>
</dbReference>
<dbReference type="GO" id="GO:0005525">
    <property type="term" value="F:GTP binding"/>
    <property type="evidence" value="ECO:0007669"/>
    <property type="project" value="UniProtKB-KW"/>
</dbReference>
<dbReference type="GO" id="GO:0003924">
    <property type="term" value="F:GTPase activity"/>
    <property type="evidence" value="ECO:0007669"/>
    <property type="project" value="UniProtKB-UniRule"/>
</dbReference>
<dbReference type="GO" id="GO:0097216">
    <property type="term" value="F:guanosine tetraphosphate binding"/>
    <property type="evidence" value="ECO:0007669"/>
    <property type="project" value="UniProtKB-ARBA"/>
</dbReference>
<dbReference type="GO" id="GO:0003743">
    <property type="term" value="F:translation initiation factor activity"/>
    <property type="evidence" value="ECO:0007669"/>
    <property type="project" value="UniProtKB-UniRule"/>
</dbReference>
<dbReference type="CDD" id="cd01887">
    <property type="entry name" value="IF2_eIF5B"/>
    <property type="match status" value="1"/>
</dbReference>
<dbReference type="CDD" id="cd03702">
    <property type="entry name" value="IF2_mtIF2_II"/>
    <property type="match status" value="1"/>
</dbReference>
<dbReference type="CDD" id="cd03692">
    <property type="entry name" value="mtIF2_IVc"/>
    <property type="match status" value="1"/>
</dbReference>
<dbReference type="FunFam" id="2.40.30.10:FF:000007">
    <property type="entry name" value="Translation initiation factor IF-2"/>
    <property type="match status" value="1"/>
</dbReference>
<dbReference type="FunFam" id="2.40.30.10:FF:000008">
    <property type="entry name" value="Translation initiation factor IF-2"/>
    <property type="match status" value="1"/>
</dbReference>
<dbReference type="FunFam" id="3.30.56.50:FF:000001">
    <property type="entry name" value="Translation initiation factor IF-2"/>
    <property type="match status" value="1"/>
</dbReference>
<dbReference type="FunFam" id="3.40.50.10050:FF:000001">
    <property type="entry name" value="Translation initiation factor IF-2"/>
    <property type="match status" value="1"/>
</dbReference>
<dbReference type="FunFam" id="3.40.50.300:FF:000019">
    <property type="entry name" value="Translation initiation factor IF-2"/>
    <property type="match status" value="1"/>
</dbReference>
<dbReference type="Gene3D" id="3.40.50.300">
    <property type="entry name" value="P-loop containing nucleotide triphosphate hydrolases"/>
    <property type="match status" value="1"/>
</dbReference>
<dbReference type="Gene3D" id="3.30.56.50">
    <property type="entry name" value="Putative DNA-binding domain, N-terminal subdomain of bacterial translation initiation factor IF2"/>
    <property type="match status" value="1"/>
</dbReference>
<dbReference type="Gene3D" id="2.40.30.10">
    <property type="entry name" value="Translation factors"/>
    <property type="match status" value="2"/>
</dbReference>
<dbReference type="Gene3D" id="3.40.50.10050">
    <property type="entry name" value="Translation initiation factor IF- 2, domain 3"/>
    <property type="match status" value="1"/>
</dbReference>
<dbReference type="HAMAP" id="MF_00100_B">
    <property type="entry name" value="IF_2_B"/>
    <property type="match status" value="1"/>
</dbReference>
<dbReference type="InterPro" id="IPR009061">
    <property type="entry name" value="DNA-bd_dom_put_sf"/>
</dbReference>
<dbReference type="InterPro" id="IPR053905">
    <property type="entry name" value="EF-G-like_DII"/>
</dbReference>
<dbReference type="InterPro" id="IPR004161">
    <property type="entry name" value="EFTu-like_2"/>
</dbReference>
<dbReference type="InterPro" id="IPR013575">
    <property type="entry name" value="IF2_assoc_dom_bac"/>
</dbReference>
<dbReference type="InterPro" id="IPR044145">
    <property type="entry name" value="IF2_II"/>
</dbReference>
<dbReference type="InterPro" id="IPR006847">
    <property type="entry name" value="IF2_N"/>
</dbReference>
<dbReference type="InterPro" id="IPR027417">
    <property type="entry name" value="P-loop_NTPase"/>
</dbReference>
<dbReference type="InterPro" id="IPR005225">
    <property type="entry name" value="Small_GTP-bd"/>
</dbReference>
<dbReference type="InterPro" id="IPR000795">
    <property type="entry name" value="T_Tr_GTP-bd_dom"/>
</dbReference>
<dbReference type="InterPro" id="IPR000178">
    <property type="entry name" value="TF_IF2_bacterial-like"/>
</dbReference>
<dbReference type="InterPro" id="IPR015760">
    <property type="entry name" value="TIF_IF2"/>
</dbReference>
<dbReference type="InterPro" id="IPR023115">
    <property type="entry name" value="TIF_IF2_dom3"/>
</dbReference>
<dbReference type="InterPro" id="IPR036925">
    <property type="entry name" value="TIF_IF2_dom3_sf"/>
</dbReference>
<dbReference type="InterPro" id="IPR009000">
    <property type="entry name" value="Transl_B-barrel_sf"/>
</dbReference>
<dbReference type="NCBIfam" id="TIGR00487">
    <property type="entry name" value="IF-2"/>
    <property type="match status" value="1"/>
</dbReference>
<dbReference type="NCBIfam" id="TIGR00231">
    <property type="entry name" value="small_GTP"/>
    <property type="match status" value="1"/>
</dbReference>
<dbReference type="PANTHER" id="PTHR43381:SF5">
    <property type="entry name" value="TR-TYPE G DOMAIN-CONTAINING PROTEIN"/>
    <property type="match status" value="1"/>
</dbReference>
<dbReference type="PANTHER" id="PTHR43381">
    <property type="entry name" value="TRANSLATION INITIATION FACTOR IF-2-RELATED"/>
    <property type="match status" value="1"/>
</dbReference>
<dbReference type="Pfam" id="PF22042">
    <property type="entry name" value="EF-G_D2"/>
    <property type="match status" value="1"/>
</dbReference>
<dbReference type="Pfam" id="PF00009">
    <property type="entry name" value="GTP_EFTU"/>
    <property type="match status" value="1"/>
</dbReference>
<dbReference type="Pfam" id="PF03144">
    <property type="entry name" value="GTP_EFTU_D2"/>
    <property type="match status" value="1"/>
</dbReference>
<dbReference type="Pfam" id="PF11987">
    <property type="entry name" value="IF-2"/>
    <property type="match status" value="1"/>
</dbReference>
<dbReference type="Pfam" id="PF08364">
    <property type="entry name" value="IF2_assoc"/>
    <property type="match status" value="1"/>
</dbReference>
<dbReference type="Pfam" id="PF04760">
    <property type="entry name" value="IF2_N"/>
    <property type="match status" value="2"/>
</dbReference>
<dbReference type="SUPFAM" id="SSF52156">
    <property type="entry name" value="Initiation factor IF2/eIF5b, domain 3"/>
    <property type="match status" value="1"/>
</dbReference>
<dbReference type="SUPFAM" id="SSF52540">
    <property type="entry name" value="P-loop containing nucleoside triphosphate hydrolases"/>
    <property type="match status" value="1"/>
</dbReference>
<dbReference type="SUPFAM" id="SSF46955">
    <property type="entry name" value="Putative DNA-binding domain"/>
    <property type="match status" value="1"/>
</dbReference>
<dbReference type="SUPFAM" id="SSF50447">
    <property type="entry name" value="Translation proteins"/>
    <property type="match status" value="2"/>
</dbReference>
<dbReference type="PROSITE" id="PS51722">
    <property type="entry name" value="G_TR_2"/>
    <property type="match status" value="1"/>
</dbReference>
<dbReference type="PROSITE" id="PS01176">
    <property type="entry name" value="IF2"/>
    <property type="match status" value="1"/>
</dbReference>
<proteinExistence type="inferred from homology"/>
<accession>B1LFS0</accession>
<protein>
    <recommendedName>
        <fullName evidence="2">Translation initiation factor IF-2</fullName>
    </recommendedName>
</protein>
<keyword id="KW-0007">Acetylation</keyword>
<keyword id="KW-0963">Cytoplasm</keyword>
<keyword id="KW-0342">GTP-binding</keyword>
<keyword id="KW-0396">Initiation factor</keyword>
<keyword id="KW-0547">Nucleotide-binding</keyword>
<keyword id="KW-0648">Protein biosynthesis</keyword>
<sequence>MTDVTIKTLAAERQTSVERLVQQFADAGIRKSADDSVSAQEKQTLIDHLNQKNSGPDKLTLQRKTRSTLNIPGTGGKSKSVQIEVRKKRTFVKRDPQEAERLAAEEQAQREAEEQARREAEESAKREAQQKAEREAAEQAKREAAEQAKREAAEKDKVSNQQDDMTKNAQAEKARREQEAAELKRKAEEEARRKLEEEARRVAEEARRMAEENKWTDNAEPTEDSSDYHVTTSQHARQAEDESDREVEGGRGRGRNAKAARPKKGNKHAESKADREEARAAVRGGKGGKRKGSSLQQGFQKPAQAVNRDVVIGETITVGELANKMAVKGSQVIKAMMKLGAMATINQVIDQETAQLVAEEMGHKVILRRENELEEAVMSDRDTGAAAEPRAPVVTIMGHVDHGKTSLLDYIRSTKVASGEAGGITQHIGAYHVETENGMITFLDTPGHAAFTSMRARGAQATDIVVLVVAADDGVMPQTIEAIQHAKAAQVPVVVAVNKIDKPEADPDRVKNELSQYGILPEEWGGESQFVHVSAKAGTGIDELLDAILLQAEVLELKAVRKGMASGAVIESFLDKGRGPVATVLVREGTLHKGDIVLCGFEYGRVRAMRNELGREVLEAGPSIPVEILGLSGVPAAGDEVTVVRDEKKAREVALYRQGKFREVKLARQQKSKLENMFANMTEGEVHEVNIVLKADVQGSVEAISDSLLKLSTDEVKVKIIGSGVGGITETDATLAAASNAILVGFNVRADASARKVIEAESLDLRYYSVIYNLIDEVKAAMSGMLSPELKQQIIGLAEVRDVFKSPKFGAIAGCMVTEGVVKRHNPIRVLRDNVVIYEGELESLRRFKDDVNEVRNGMECGIGVKNYNDVRTGDVIEVFEIIEIQRTIA</sequence>
<gene>
    <name evidence="2" type="primary">infB</name>
    <name type="ordered locus">EcSMS35_3464</name>
</gene>
<comment type="function">
    <text evidence="2">One of the essential components for the initiation of protein synthesis. Protects formylmethionyl-tRNA from spontaneous hydrolysis and promotes its binding to the 30S ribosomal subunits. Also involved in the hydrolysis of GTP during the formation of the 70S ribosomal complex.</text>
</comment>
<comment type="subcellular location">
    <subcellularLocation>
        <location evidence="2">Cytoplasm</location>
    </subcellularLocation>
</comment>
<comment type="similarity">
    <text evidence="2">Belongs to the TRAFAC class translation factor GTPase superfamily. Classic translation factor GTPase family. IF-2 subfamily.</text>
</comment>
<organism>
    <name type="scientific">Escherichia coli (strain SMS-3-5 / SECEC)</name>
    <dbReference type="NCBI Taxonomy" id="439855"/>
    <lineage>
        <taxon>Bacteria</taxon>
        <taxon>Pseudomonadati</taxon>
        <taxon>Pseudomonadota</taxon>
        <taxon>Gammaproteobacteria</taxon>
        <taxon>Enterobacterales</taxon>
        <taxon>Enterobacteriaceae</taxon>
        <taxon>Escherichia</taxon>
    </lineage>
</organism>
<reference key="1">
    <citation type="journal article" date="2008" name="J. Bacteriol.">
        <title>Insights into the environmental resistance gene pool from the genome sequence of the multidrug-resistant environmental isolate Escherichia coli SMS-3-5.</title>
        <authorList>
            <person name="Fricke W.F."/>
            <person name="Wright M.S."/>
            <person name="Lindell A.H."/>
            <person name="Harkins D.M."/>
            <person name="Baker-Austin C."/>
            <person name="Ravel J."/>
            <person name="Stepanauskas R."/>
        </authorList>
    </citation>
    <scope>NUCLEOTIDE SEQUENCE [LARGE SCALE GENOMIC DNA]</scope>
    <source>
        <strain>SMS-3-5 / SECEC</strain>
    </source>
</reference>
<evidence type="ECO:0000250" key="1"/>
<evidence type="ECO:0000255" key="2">
    <source>
        <dbReference type="HAMAP-Rule" id="MF_00100"/>
    </source>
</evidence>
<evidence type="ECO:0000256" key="3">
    <source>
        <dbReference type="SAM" id="MobiDB-lite"/>
    </source>
</evidence>